<gene>
    <name type="ordered locus">XCC1285</name>
</gene>
<sequence length="250" mass="26216">MSSNSIALAVIGGTGVYKLAQLDQVQTHEVDTPYGAPSGPIRVGMLLGHRVAFLARHGEGHSLPPHKVNYRANIAALQQIGATRVLALNTVGGITDSFGPRVLACPDQLIDYTWGRISTFCEEAGSEVQHVDFGHPYSPMFRSKVIAAAKVTGVTLVAGGCYGATQGPRLETIAEIARMRRDGCDLVGMTGMPEAALAREKGLEYACLAIVANWAAGCGDAQEITMAEVLSNVDAASSGLPELIGELARG</sequence>
<name>MTIP_XANCP</name>
<dbReference type="EC" id="2.4.2.44" evidence="1"/>
<dbReference type="EMBL" id="AE008922">
    <property type="protein sequence ID" value="AAM40583.1"/>
    <property type="molecule type" value="Genomic_DNA"/>
</dbReference>
<dbReference type="RefSeq" id="NP_636659.1">
    <property type="nucleotide sequence ID" value="NC_003902.1"/>
</dbReference>
<dbReference type="RefSeq" id="WP_011036479.1">
    <property type="nucleotide sequence ID" value="NC_003902.1"/>
</dbReference>
<dbReference type="SMR" id="Q8PB40"/>
<dbReference type="STRING" id="190485.XCC1285"/>
<dbReference type="EnsemblBacteria" id="AAM40583">
    <property type="protein sequence ID" value="AAM40583"/>
    <property type="gene ID" value="XCC1285"/>
</dbReference>
<dbReference type="KEGG" id="xcc:XCC1285"/>
<dbReference type="PATRIC" id="fig|190485.4.peg.1376"/>
<dbReference type="eggNOG" id="COG0005">
    <property type="taxonomic scope" value="Bacteria"/>
</dbReference>
<dbReference type="HOGENOM" id="CLU_054456_0_2_6"/>
<dbReference type="OrthoDB" id="1523230at2"/>
<dbReference type="UniPathway" id="UPA00606"/>
<dbReference type="Proteomes" id="UP000001010">
    <property type="component" value="Chromosome"/>
</dbReference>
<dbReference type="GO" id="GO:0005829">
    <property type="term" value="C:cytosol"/>
    <property type="evidence" value="ECO:0000318"/>
    <property type="project" value="GO_Central"/>
</dbReference>
<dbReference type="GO" id="GO:0017061">
    <property type="term" value="F:S-methyl-5-thioadenosine phosphorylase activity"/>
    <property type="evidence" value="ECO:0000318"/>
    <property type="project" value="GO_Central"/>
</dbReference>
<dbReference type="GO" id="GO:0019509">
    <property type="term" value="P:L-methionine salvage from methylthioadenosine"/>
    <property type="evidence" value="ECO:0000318"/>
    <property type="project" value="GO_Central"/>
</dbReference>
<dbReference type="GO" id="GO:0006166">
    <property type="term" value="P:purine ribonucleoside salvage"/>
    <property type="evidence" value="ECO:0007669"/>
    <property type="project" value="UniProtKB-UniRule"/>
</dbReference>
<dbReference type="CDD" id="cd09010">
    <property type="entry name" value="MTAP_SsMTAPII_like_MTIP"/>
    <property type="match status" value="1"/>
</dbReference>
<dbReference type="FunFam" id="3.40.50.1580:FF:000014">
    <property type="entry name" value="Probable S-methyl-5'-thioinosine phosphorylase"/>
    <property type="match status" value="1"/>
</dbReference>
<dbReference type="Gene3D" id="3.40.50.1580">
    <property type="entry name" value="Nucleoside phosphorylase domain"/>
    <property type="match status" value="1"/>
</dbReference>
<dbReference type="HAMAP" id="MF_01963">
    <property type="entry name" value="MTAP"/>
    <property type="match status" value="1"/>
</dbReference>
<dbReference type="InterPro" id="IPR010044">
    <property type="entry name" value="MTAP"/>
</dbReference>
<dbReference type="InterPro" id="IPR000845">
    <property type="entry name" value="Nucleoside_phosphorylase_d"/>
</dbReference>
<dbReference type="InterPro" id="IPR035994">
    <property type="entry name" value="Nucleoside_phosphorylase_sf"/>
</dbReference>
<dbReference type="InterPro" id="IPR018099">
    <property type="entry name" value="Purine_phosphorylase-2_CS"/>
</dbReference>
<dbReference type="NCBIfam" id="NF006599">
    <property type="entry name" value="PRK09136.1"/>
    <property type="match status" value="1"/>
</dbReference>
<dbReference type="PANTHER" id="PTHR42679">
    <property type="entry name" value="S-METHYL-5'-THIOADENOSINE PHOSPHORYLASE"/>
    <property type="match status" value="1"/>
</dbReference>
<dbReference type="PANTHER" id="PTHR42679:SF2">
    <property type="entry name" value="S-METHYL-5'-THIOADENOSINE PHOSPHORYLASE"/>
    <property type="match status" value="1"/>
</dbReference>
<dbReference type="Pfam" id="PF01048">
    <property type="entry name" value="PNP_UDP_1"/>
    <property type="match status" value="1"/>
</dbReference>
<dbReference type="SUPFAM" id="SSF53167">
    <property type="entry name" value="Purine and uridine phosphorylases"/>
    <property type="match status" value="1"/>
</dbReference>
<dbReference type="PROSITE" id="PS01240">
    <property type="entry name" value="PNP_MTAP_2"/>
    <property type="match status" value="1"/>
</dbReference>
<comment type="function">
    <text evidence="1">Catalyzes the reversible phosphorylation of S-methyl-5'-thioinosine (MTI) to hypoxanthine and 5-methylthioribose-1-phosphate. Involved in the breakdown of S-methyl-5'-thioadenosine (MTA), a major by-product of polyamine biosynthesis. Catabolism of (MTA) occurs via deamination to MTI and phosphorolysis to hypoxanthine.</text>
</comment>
<comment type="catalytic activity">
    <reaction evidence="1">
        <text>S-methyl-5'-thioinosine + phosphate = 5-(methylsulfanyl)-alpha-D-ribose 1-phosphate + hypoxanthine</text>
        <dbReference type="Rhea" id="RHEA:30643"/>
        <dbReference type="ChEBI" id="CHEBI:17368"/>
        <dbReference type="ChEBI" id="CHEBI:43474"/>
        <dbReference type="ChEBI" id="CHEBI:48595"/>
        <dbReference type="ChEBI" id="CHEBI:58533"/>
        <dbReference type="EC" id="2.4.2.44"/>
    </reaction>
</comment>
<comment type="pathway">
    <text evidence="1">Purine metabolism; purine nucleoside salvage.</text>
</comment>
<comment type="subunit">
    <text evidence="1">Homotrimer.</text>
</comment>
<comment type="miscellaneous">
    <text evidence="1">Although this enzyme belongs to the family of MTA phosphorylases based on sequence homology, it has been shown that conserved amino acid substitutions in the substrate binding pocket convert the substrate specificity of this enzyme from 6-aminopurines to 6-oxopurines.</text>
</comment>
<comment type="similarity">
    <text evidence="1">Belongs to the PNP/MTAP phosphorylase family. MTAP subfamily.</text>
</comment>
<evidence type="ECO:0000255" key="1">
    <source>
        <dbReference type="HAMAP-Rule" id="MF_01963"/>
    </source>
</evidence>
<protein>
    <recommendedName>
        <fullName evidence="1">Probable S-methyl-5'-thioinosine phosphorylase</fullName>
        <ecNumber evidence="1">2.4.2.44</ecNumber>
    </recommendedName>
    <alternativeName>
        <fullName evidence="1">5'-methylthioinosine phosphorylase</fullName>
        <shortName evidence="1">MTI phosphorylase</shortName>
        <shortName evidence="1">MTIP</shortName>
    </alternativeName>
</protein>
<reference key="1">
    <citation type="journal article" date="2002" name="Nature">
        <title>Comparison of the genomes of two Xanthomonas pathogens with differing host specificities.</title>
        <authorList>
            <person name="da Silva A.C.R."/>
            <person name="Ferro J.A."/>
            <person name="Reinach F.C."/>
            <person name="Farah C.S."/>
            <person name="Furlan L.R."/>
            <person name="Quaggio R.B."/>
            <person name="Monteiro-Vitorello C.B."/>
            <person name="Van Sluys M.A."/>
            <person name="Almeida N.F. Jr."/>
            <person name="Alves L.M.C."/>
            <person name="do Amaral A.M."/>
            <person name="Bertolini M.C."/>
            <person name="Camargo L.E.A."/>
            <person name="Camarotte G."/>
            <person name="Cannavan F."/>
            <person name="Cardozo J."/>
            <person name="Chambergo F."/>
            <person name="Ciapina L.P."/>
            <person name="Cicarelli R.M.B."/>
            <person name="Coutinho L.L."/>
            <person name="Cursino-Santos J.R."/>
            <person name="El-Dorry H."/>
            <person name="Faria J.B."/>
            <person name="Ferreira A.J.S."/>
            <person name="Ferreira R.C.C."/>
            <person name="Ferro M.I.T."/>
            <person name="Formighieri E.F."/>
            <person name="Franco M.C."/>
            <person name="Greggio C.C."/>
            <person name="Gruber A."/>
            <person name="Katsuyama A.M."/>
            <person name="Kishi L.T."/>
            <person name="Leite R.P."/>
            <person name="Lemos E.G.M."/>
            <person name="Lemos M.V.F."/>
            <person name="Locali E.C."/>
            <person name="Machado M.A."/>
            <person name="Madeira A.M.B.N."/>
            <person name="Martinez-Rossi N.M."/>
            <person name="Martins E.C."/>
            <person name="Meidanis J."/>
            <person name="Menck C.F.M."/>
            <person name="Miyaki C.Y."/>
            <person name="Moon D.H."/>
            <person name="Moreira L.M."/>
            <person name="Novo M.T.M."/>
            <person name="Okura V.K."/>
            <person name="Oliveira M.C."/>
            <person name="Oliveira V.R."/>
            <person name="Pereira H.A."/>
            <person name="Rossi A."/>
            <person name="Sena J.A.D."/>
            <person name="Silva C."/>
            <person name="de Souza R.F."/>
            <person name="Spinola L.A.F."/>
            <person name="Takita M.A."/>
            <person name="Tamura R.E."/>
            <person name="Teixeira E.C."/>
            <person name="Tezza R.I.D."/>
            <person name="Trindade dos Santos M."/>
            <person name="Truffi D."/>
            <person name="Tsai S.M."/>
            <person name="White F.F."/>
            <person name="Setubal J.C."/>
            <person name="Kitajima J.P."/>
        </authorList>
    </citation>
    <scope>NUCLEOTIDE SEQUENCE [LARGE SCALE GENOMIC DNA]</scope>
    <source>
        <strain>ATCC 33913 / DSM 3586 / NCPPB 528 / LMG 568 / P 25</strain>
    </source>
</reference>
<feature type="chain" id="PRO_0000415140" description="Probable S-methyl-5'-thioinosine phosphorylase">
    <location>
        <begin position="1"/>
        <end position="250"/>
    </location>
</feature>
<feature type="binding site" evidence="1">
    <location>
        <position position="14"/>
    </location>
    <ligand>
        <name>phosphate</name>
        <dbReference type="ChEBI" id="CHEBI:43474"/>
    </ligand>
</feature>
<feature type="binding site" evidence="1">
    <location>
        <begin position="56"/>
        <end position="57"/>
    </location>
    <ligand>
        <name>phosphate</name>
        <dbReference type="ChEBI" id="CHEBI:43474"/>
    </ligand>
</feature>
<feature type="binding site" evidence="1">
    <location>
        <position position="189"/>
    </location>
    <ligand>
        <name>substrate</name>
    </ligand>
</feature>
<feature type="binding site" evidence="1">
    <location>
        <position position="190"/>
    </location>
    <ligand>
        <name>phosphate</name>
        <dbReference type="ChEBI" id="CHEBI:43474"/>
    </ligand>
</feature>
<feature type="binding site" evidence="1">
    <location>
        <begin position="213"/>
        <end position="215"/>
    </location>
    <ligand>
        <name>substrate</name>
    </ligand>
</feature>
<feature type="site" description="Important for substrate specificity" evidence="1">
    <location>
        <position position="171"/>
    </location>
</feature>
<feature type="site" description="Important for substrate specificity" evidence="1">
    <location>
        <position position="226"/>
    </location>
</feature>
<organism>
    <name type="scientific">Xanthomonas campestris pv. campestris (strain ATCC 33913 / DSM 3586 / NCPPB 528 / LMG 568 / P 25)</name>
    <dbReference type="NCBI Taxonomy" id="190485"/>
    <lineage>
        <taxon>Bacteria</taxon>
        <taxon>Pseudomonadati</taxon>
        <taxon>Pseudomonadota</taxon>
        <taxon>Gammaproteobacteria</taxon>
        <taxon>Lysobacterales</taxon>
        <taxon>Lysobacteraceae</taxon>
        <taxon>Xanthomonas</taxon>
    </lineage>
</organism>
<accession>Q8PB40</accession>
<keyword id="KW-0328">Glycosyltransferase</keyword>
<keyword id="KW-0660">Purine salvage</keyword>
<keyword id="KW-1185">Reference proteome</keyword>
<keyword id="KW-0808">Transferase</keyword>
<proteinExistence type="inferred from homology"/>